<organism>
    <name type="scientific">Shigella boydii serotype 4 (strain Sb227)</name>
    <dbReference type="NCBI Taxonomy" id="300268"/>
    <lineage>
        <taxon>Bacteria</taxon>
        <taxon>Pseudomonadati</taxon>
        <taxon>Pseudomonadota</taxon>
        <taxon>Gammaproteobacteria</taxon>
        <taxon>Enterobacterales</taxon>
        <taxon>Enterobacteriaceae</taxon>
        <taxon>Shigella</taxon>
    </lineage>
</organism>
<proteinExistence type="inferred from homology"/>
<comment type="function">
    <text evidence="1">Catalyzes the ATP-dependent transfer of a sulfur to tRNA to produce 4-thiouridine in position 8 of tRNAs, which functions as a near-UV photosensor. Also catalyzes the transfer of sulfur to the sulfur carrier protein ThiS, forming ThiS-thiocarboxylate. This is a step in the synthesis of thiazole, in the thiamine biosynthesis pathway. The sulfur is donated as persulfide by IscS.</text>
</comment>
<comment type="catalytic activity">
    <reaction evidence="1">
        <text>[ThiI sulfur-carrier protein]-S-sulfanyl-L-cysteine + a uridine in tRNA + 2 reduced [2Fe-2S]-[ferredoxin] + ATP + H(+) = [ThiI sulfur-carrier protein]-L-cysteine + a 4-thiouridine in tRNA + 2 oxidized [2Fe-2S]-[ferredoxin] + AMP + diphosphate</text>
        <dbReference type="Rhea" id="RHEA:24176"/>
        <dbReference type="Rhea" id="RHEA-COMP:10000"/>
        <dbReference type="Rhea" id="RHEA-COMP:10001"/>
        <dbReference type="Rhea" id="RHEA-COMP:13337"/>
        <dbReference type="Rhea" id="RHEA-COMP:13338"/>
        <dbReference type="Rhea" id="RHEA-COMP:13339"/>
        <dbReference type="Rhea" id="RHEA-COMP:13340"/>
        <dbReference type="ChEBI" id="CHEBI:15378"/>
        <dbReference type="ChEBI" id="CHEBI:29950"/>
        <dbReference type="ChEBI" id="CHEBI:30616"/>
        <dbReference type="ChEBI" id="CHEBI:33019"/>
        <dbReference type="ChEBI" id="CHEBI:33737"/>
        <dbReference type="ChEBI" id="CHEBI:33738"/>
        <dbReference type="ChEBI" id="CHEBI:61963"/>
        <dbReference type="ChEBI" id="CHEBI:65315"/>
        <dbReference type="ChEBI" id="CHEBI:136798"/>
        <dbReference type="ChEBI" id="CHEBI:456215"/>
        <dbReference type="EC" id="2.8.1.4"/>
    </reaction>
</comment>
<comment type="catalytic activity">
    <reaction evidence="1">
        <text>[ThiS sulfur-carrier protein]-C-terminal Gly-Gly-AMP + S-sulfanyl-L-cysteinyl-[cysteine desulfurase] + AH2 = [ThiS sulfur-carrier protein]-C-terminal-Gly-aminoethanethioate + L-cysteinyl-[cysteine desulfurase] + A + AMP + 2 H(+)</text>
        <dbReference type="Rhea" id="RHEA:43340"/>
        <dbReference type="Rhea" id="RHEA-COMP:12157"/>
        <dbReference type="Rhea" id="RHEA-COMP:12158"/>
        <dbReference type="Rhea" id="RHEA-COMP:12910"/>
        <dbReference type="Rhea" id="RHEA-COMP:19908"/>
        <dbReference type="ChEBI" id="CHEBI:13193"/>
        <dbReference type="ChEBI" id="CHEBI:15378"/>
        <dbReference type="ChEBI" id="CHEBI:17499"/>
        <dbReference type="ChEBI" id="CHEBI:29950"/>
        <dbReference type="ChEBI" id="CHEBI:61963"/>
        <dbReference type="ChEBI" id="CHEBI:90618"/>
        <dbReference type="ChEBI" id="CHEBI:232372"/>
        <dbReference type="ChEBI" id="CHEBI:456215"/>
    </reaction>
</comment>
<comment type="pathway">
    <text evidence="1">Cofactor biosynthesis; thiamine diphosphate biosynthesis.</text>
</comment>
<comment type="subcellular location">
    <subcellularLocation>
        <location evidence="1">Cytoplasm</location>
    </subcellularLocation>
</comment>
<comment type="similarity">
    <text evidence="1">Belongs to the ThiI family.</text>
</comment>
<dbReference type="EC" id="2.8.1.4" evidence="1"/>
<dbReference type="EMBL" id="CP000036">
    <property type="protein sequence ID" value="ABB65030.1"/>
    <property type="molecule type" value="Genomic_DNA"/>
</dbReference>
<dbReference type="RefSeq" id="WP_000668678.1">
    <property type="nucleotide sequence ID" value="NC_007613.1"/>
</dbReference>
<dbReference type="SMR" id="Q325H8"/>
<dbReference type="KEGG" id="sbo:SBO_0317"/>
<dbReference type="HOGENOM" id="CLU_037952_4_1_6"/>
<dbReference type="UniPathway" id="UPA00060"/>
<dbReference type="Proteomes" id="UP000007067">
    <property type="component" value="Chromosome"/>
</dbReference>
<dbReference type="GO" id="GO:0005829">
    <property type="term" value="C:cytosol"/>
    <property type="evidence" value="ECO:0007669"/>
    <property type="project" value="TreeGrafter"/>
</dbReference>
<dbReference type="GO" id="GO:0005524">
    <property type="term" value="F:ATP binding"/>
    <property type="evidence" value="ECO:0007669"/>
    <property type="project" value="UniProtKB-UniRule"/>
</dbReference>
<dbReference type="GO" id="GO:0004810">
    <property type="term" value="F:CCA tRNA nucleotidyltransferase activity"/>
    <property type="evidence" value="ECO:0007669"/>
    <property type="project" value="InterPro"/>
</dbReference>
<dbReference type="GO" id="GO:0000049">
    <property type="term" value="F:tRNA binding"/>
    <property type="evidence" value="ECO:0007669"/>
    <property type="project" value="UniProtKB-UniRule"/>
</dbReference>
<dbReference type="GO" id="GO:0140741">
    <property type="term" value="F:tRNA-uracil-4 sulfurtransferase activity"/>
    <property type="evidence" value="ECO:0007669"/>
    <property type="project" value="UniProtKB-EC"/>
</dbReference>
<dbReference type="GO" id="GO:0009228">
    <property type="term" value="P:thiamine biosynthetic process"/>
    <property type="evidence" value="ECO:0007669"/>
    <property type="project" value="UniProtKB-KW"/>
</dbReference>
<dbReference type="GO" id="GO:0009229">
    <property type="term" value="P:thiamine diphosphate biosynthetic process"/>
    <property type="evidence" value="ECO:0007669"/>
    <property type="project" value="UniProtKB-UniRule"/>
</dbReference>
<dbReference type="GO" id="GO:0052837">
    <property type="term" value="P:thiazole biosynthetic process"/>
    <property type="evidence" value="ECO:0007669"/>
    <property type="project" value="InterPro"/>
</dbReference>
<dbReference type="GO" id="GO:0002937">
    <property type="term" value="P:tRNA 4-thiouridine biosynthesis"/>
    <property type="evidence" value="ECO:0007669"/>
    <property type="project" value="TreeGrafter"/>
</dbReference>
<dbReference type="CDD" id="cd01712">
    <property type="entry name" value="PPase_ThiI"/>
    <property type="match status" value="1"/>
</dbReference>
<dbReference type="CDD" id="cd00158">
    <property type="entry name" value="RHOD"/>
    <property type="match status" value="1"/>
</dbReference>
<dbReference type="CDD" id="cd11716">
    <property type="entry name" value="THUMP_ThiI"/>
    <property type="match status" value="1"/>
</dbReference>
<dbReference type="FunFam" id="3.30.2130.30:FF:000002">
    <property type="entry name" value="tRNA sulfurtransferase"/>
    <property type="match status" value="1"/>
</dbReference>
<dbReference type="FunFam" id="3.40.250.10:FF:000003">
    <property type="entry name" value="tRNA sulfurtransferase"/>
    <property type="match status" value="1"/>
</dbReference>
<dbReference type="FunFam" id="3.40.50.620:FF:000029">
    <property type="entry name" value="tRNA sulfurtransferase"/>
    <property type="match status" value="1"/>
</dbReference>
<dbReference type="Gene3D" id="3.30.2130.30">
    <property type="match status" value="1"/>
</dbReference>
<dbReference type="Gene3D" id="3.40.50.620">
    <property type="entry name" value="HUPs"/>
    <property type="match status" value="1"/>
</dbReference>
<dbReference type="Gene3D" id="3.40.250.10">
    <property type="entry name" value="Rhodanese-like domain"/>
    <property type="match status" value="1"/>
</dbReference>
<dbReference type="HAMAP" id="MF_00021">
    <property type="entry name" value="ThiI"/>
    <property type="match status" value="1"/>
</dbReference>
<dbReference type="InterPro" id="IPR001763">
    <property type="entry name" value="Rhodanese-like_dom"/>
</dbReference>
<dbReference type="InterPro" id="IPR036873">
    <property type="entry name" value="Rhodanese-like_dom_sf"/>
</dbReference>
<dbReference type="InterPro" id="IPR014729">
    <property type="entry name" value="Rossmann-like_a/b/a_fold"/>
</dbReference>
<dbReference type="InterPro" id="IPR020536">
    <property type="entry name" value="ThiI_AANH"/>
</dbReference>
<dbReference type="InterPro" id="IPR054173">
    <property type="entry name" value="ThiI_fer"/>
</dbReference>
<dbReference type="InterPro" id="IPR049961">
    <property type="entry name" value="ThiI_N"/>
</dbReference>
<dbReference type="InterPro" id="IPR026340">
    <property type="entry name" value="THII_Thiazole_biosynth_dom"/>
</dbReference>
<dbReference type="InterPro" id="IPR004114">
    <property type="entry name" value="THUMP_dom"/>
</dbReference>
<dbReference type="InterPro" id="IPR049962">
    <property type="entry name" value="THUMP_ThiI"/>
</dbReference>
<dbReference type="InterPro" id="IPR003720">
    <property type="entry name" value="tRNA_STrfase"/>
</dbReference>
<dbReference type="InterPro" id="IPR050102">
    <property type="entry name" value="tRNA_sulfurtransferase_ThiI"/>
</dbReference>
<dbReference type="NCBIfam" id="TIGR04271">
    <property type="entry name" value="ThiI_C_thiazole"/>
    <property type="match status" value="1"/>
</dbReference>
<dbReference type="NCBIfam" id="TIGR00342">
    <property type="entry name" value="tRNA uracil 4-sulfurtransferase ThiI"/>
    <property type="match status" value="1"/>
</dbReference>
<dbReference type="PANTHER" id="PTHR43209">
    <property type="entry name" value="TRNA SULFURTRANSFERASE"/>
    <property type="match status" value="1"/>
</dbReference>
<dbReference type="PANTHER" id="PTHR43209:SF1">
    <property type="entry name" value="TRNA SULFURTRANSFERASE"/>
    <property type="match status" value="1"/>
</dbReference>
<dbReference type="Pfam" id="PF02568">
    <property type="entry name" value="ThiI"/>
    <property type="match status" value="1"/>
</dbReference>
<dbReference type="Pfam" id="PF22025">
    <property type="entry name" value="ThiI_fer"/>
    <property type="match status" value="1"/>
</dbReference>
<dbReference type="Pfam" id="PF02926">
    <property type="entry name" value="THUMP"/>
    <property type="match status" value="1"/>
</dbReference>
<dbReference type="SMART" id="SM00981">
    <property type="entry name" value="THUMP"/>
    <property type="match status" value="1"/>
</dbReference>
<dbReference type="SUPFAM" id="SSF52402">
    <property type="entry name" value="Adenine nucleotide alpha hydrolases-like"/>
    <property type="match status" value="1"/>
</dbReference>
<dbReference type="SUPFAM" id="SSF52821">
    <property type="entry name" value="Rhodanese/Cell cycle control phosphatase"/>
    <property type="match status" value="1"/>
</dbReference>
<dbReference type="SUPFAM" id="SSF143437">
    <property type="entry name" value="THUMP domain-like"/>
    <property type="match status" value="1"/>
</dbReference>
<dbReference type="PROSITE" id="PS50206">
    <property type="entry name" value="RHODANESE_3"/>
    <property type="match status" value="1"/>
</dbReference>
<dbReference type="PROSITE" id="PS51165">
    <property type="entry name" value="THUMP"/>
    <property type="match status" value="1"/>
</dbReference>
<sequence length="482" mass="55000">MKFIIKLFPEITIKSQSVRLRFIKILTGNIRNVLKHYDETLAVVRHWDNIEVRAKDENQRLAIRDALTRIPGIHHILEVEDVPFTDMHDIFEKALVQYRDQLEGKTFCVRVKRRGKHDFSSIDVERYVGGGLNQHIESARVKLTNPEVTVHLEVEDDRLLLIKGRYEGIGGFPIGTQEDVLSLISGGFDSGVSSYMLMRRGCRVHYCFFNLGGAAHEIGVRQVAHYLWNRFGSSHRVRFVAINFEPVVGEILEKIDDGQMGVILKRMMVRAASKVAERYGVQALVTGEALGQVSSQTLTNLRLIDNVSDTLILRPLISYDKEHIINLARQIGTEDFARTMPEYCGVISKSPTVKAVKSKIEAEEEKFDFSILDKVVEEANNVDIREIALQTEQEVVEVETVNGFGPNDVILDIRSIDEQEDKPLKVEGIDVVSLPFYKLSTKFGDLDQNRTWLLWCERGVMSRLQALYLREQGFNNVKVYRP</sequence>
<gene>
    <name evidence="1" type="primary">thiI</name>
    <name type="ordered locus">SBO_0317</name>
</gene>
<accession>Q325H8</accession>
<reference key="1">
    <citation type="journal article" date="2005" name="Nucleic Acids Res.">
        <title>Genome dynamics and diversity of Shigella species, the etiologic agents of bacillary dysentery.</title>
        <authorList>
            <person name="Yang F."/>
            <person name="Yang J."/>
            <person name="Zhang X."/>
            <person name="Chen L."/>
            <person name="Jiang Y."/>
            <person name="Yan Y."/>
            <person name="Tang X."/>
            <person name="Wang J."/>
            <person name="Xiong Z."/>
            <person name="Dong J."/>
            <person name="Xue Y."/>
            <person name="Zhu Y."/>
            <person name="Xu X."/>
            <person name="Sun L."/>
            <person name="Chen S."/>
            <person name="Nie H."/>
            <person name="Peng J."/>
            <person name="Xu J."/>
            <person name="Wang Y."/>
            <person name="Yuan Z."/>
            <person name="Wen Y."/>
            <person name="Yao Z."/>
            <person name="Shen Y."/>
            <person name="Qiang B."/>
            <person name="Hou Y."/>
            <person name="Yu J."/>
            <person name="Jin Q."/>
        </authorList>
    </citation>
    <scope>NUCLEOTIDE SEQUENCE [LARGE SCALE GENOMIC DNA]</scope>
    <source>
        <strain>Sb227</strain>
    </source>
</reference>
<name>THII_SHIBS</name>
<keyword id="KW-0067">ATP-binding</keyword>
<keyword id="KW-0963">Cytoplasm</keyword>
<keyword id="KW-1015">Disulfide bond</keyword>
<keyword id="KW-0547">Nucleotide-binding</keyword>
<keyword id="KW-0676">Redox-active center</keyword>
<keyword id="KW-0694">RNA-binding</keyword>
<keyword id="KW-0784">Thiamine biosynthesis</keyword>
<keyword id="KW-0808">Transferase</keyword>
<keyword id="KW-0820">tRNA-binding</keyword>
<feature type="chain" id="PRO_1000074277" description="tRNA sulfurtransferase">
    <location>
        <begin position="1"/>
        <end position="482"/>
    </location>
</feature>
<feature type="domain" description="THUMP" evidence="1">
    <location>
        <begin position="61"/>
        <end position="165"/>
    </location>
</feature>
<feature type="domain" description="Rhodanese" evidence="1">
    <location>
        <begin position="404"/>
        <end position="482"/>
    </location>
</feature>
<feature type="active site" description="Cysteine persulfide intermediate" evidence="1">
    <location>
        <position position="456"/>
    </location>
</feature>
<feature type="binding site" evidence="1">
    <location>
        <begin position="183"/>
        <end position="184"/>
    </location>
    <ligand>
        <name>ATP</name>
        <dbReference type="ChEBI" id="CHEBI:30616"/>
    </ligand>
</feature>
<feature type="binding site" evidence="1">
    <location>
        <position position="265"/>
    </location>
    <ligand>
        <name>ATP</name>
        <dbReference type="ChEBI" id="CHEBI:30616"/>
    </ligand>
</feature>
<feature type="binding site" evidence="1">
    <location>
        <position position="287"/>
    </location>
    <ligand>
        <name>ATP</name>
        <dbReference type="ChEBI" id="CHEBI:30616"/>
    </ligand>
</feature>
<feature type="binding site" evidence="1">
    <location>
        <position position="296"/>
    </location>
    <ligand>
        <name>ATP</name>
        <dbReference type="ChEBI" id="CHEBI:30616"/>
    </ligand>
</feature>
<feature type="disulfide bond" description="Redox-active" evidence="1">
    <location>
        <begin position="344"/>
        <end position="456"/>
    </location>
</feature>
<protein>
    <recommendedName>
        <fullName evidence="1">tRNA sulfurtransferase</fullName>
        <ecNumber evidence="1">2.8.1.4</ecNumber>
    </recommendedName>
    <alternativeName>
        <fullName evidence="1">Sulfur carrier protein ThiS sulfurtransferase</fullName>
    </alternativeName>
    <alternativeName>
        <fullName evidence="1">Thiamine biosynthesis protein ThiI</fullName>
    </alternativeName>
    <alternativeName>
        <fullName evidence="1">tRNA 4-thiouridine synthase</fullName>
    </alternativeName>
</protein>
<evidence type="ECO:0000255" key="1">
    <source>
        <dbReference type="HAMAP-Rule" id="MF_00021"/>
    </source>
</evidence>